<sequence>MRVNAQHKNARISAQKARLVADLIRGKDVAQALNILAFSPKKGAELIKKVLESAIANAEHNNGADIDELKVVTIFVDKGPSLKRFQARAKGRGNRIEKQTCHINVTVGN</sequence>
<reference key="1">
    <citation type="submission" date="2003-03" db="EMBL/GenBank/DDBJ databases">
        <title>The complete genome sequence of Neisseria gonorrhoeae.</title>
        <authorList>
            <person name="Lewis L.A."/>
            <person name="Gillaspy A.F."/>
            <person name="McLaughlin R.E."/>
            <person name="Gipson M."/>
            <person name="Ducey T.F."/>
            <person name="Ownbey T."/>
            <person name="Hartman K."/>
            <person name="Nydick C."/>
            <person name="Carson M.B."/>
            <person name="Vaughn J."/>
            <person name="Thomson C."/>
            <person name="Song L."/>
            <person name="Lin S."/>
            <person name="Yuan X."/>
            <person name="Najar F."/>
            <person name="Zhan M."/>
            <person name="Ren Q."/>
            <person name="Zhu H."/>
            <person name="Qi S."/>
            <person name="Kenton S.M."/>
            <person name="Lai H."/>
            <person name="White J.D."/>
            <person name="Clifton S."/>
            <person name="Roe B.A."/>
            <person name="Dyer D.W."/>
        </authorList>
    </citation>
    <scope>NUCLEOTIDE SEQUENCE [LARGE SCALE GENOMIC DNA]</scope>
    <source>
        <strain>ATCC 700825 / FA 1090</strain>
    </source>
</reference>
<gene>
    <name evidence="1" type="primary">rplV</name>
    <name type="ordered locus">NGO_1833</name>
</gene>
<accession>Q5F5T2</accession>
<dbReference type="EMBL" id="AE004969">
    <property type="protein sequence ID" value="AAW90455.1"/>
    <property type="molecule type" value="Genomic_DNA"/>
</dbReference>
<dbReference type="RefSeq" id="WP_002215424.1">
    <property type="nucleotide sequence ID" value="NC_002946.2"/>
</dbReference>
<dbReference type="RefSeq" id="YP_208867.1">
    <property type="nucleotide sequence ID" value="NC_002946.2"/>
</dbReference>
<dbReference type="SMR" id="Q5F5T2"/>
<dbReference type="STRING" id="242231.NGO_1833"/>
<dbReference type="GeneID" id="93387222"/>
<dbReference type="KEGG" id="ngo:NGO_1833"/>
<dbReference type="PATRIC" id="fig|242231.10.peg.2204"/>
<dbReference type="HOGENOM" id="CLU_083987_3_3_4"/>
<dbReference type="Proteomes" id="UP000000535">
    <property type="component" value="Chromosome"/>
</dbReference>
<dbReference type="GO" id="GO:0022625">
    <property type="term" value="C:cytosolic large ribosomal subunit"/>
    <property type="evidence" value="ECO:0007669"/>
    <property type="project" value="TreeGrafter"/>
</dbReference>
<dbReference type="GO" id="GO:0019843">
    <property type="term" value="F:rRNA binding"/>
    <property type="evidence" value="ECO:0007669"/>
    <property type="project" value="UniProtKB-UniRule"/>
</dbReference>
<dbReference type="GO" id="GO:0003735">
    <property type="term" value="F:structural constituent of ribosome"/>
    <property type="evidence" value="ECO:0007669"/>
    <property type="project" value="InterPro"/>
</dbReference>
<dbReference type="GO" id="GO:0006412">
    <property type="term" value="P:translation"/>
    <property type="evidence" value="ECO:0007669"/>
    <property type="project" value="UniProtKB-UniRule"/>
</dbReference>
<dbReference type="CDD" id="cd00336">
    <property type="entry name" value="Ribosomal_L22"/>
    <property type="match status" value="1"/>
</dbReference>
<dbReference type="FunFam" id="3.90.470.10:FF:000001">
    <property type="entry name" value="50S ribosomal protein L22"/>
    <property type="match status" value="1"/>
</dbReference>
<dbReference type="Gene3D" id="3.90.470.10">
    <property type="entry name" value="Ribosomal protein L22/L17"/>
    <property type="match status" value="1"/>
</dbReference>
<dbReference type="HAMAP" id="MF_01331_B">
    <property type="entry name" value="Ribosomal_uL22_B"/>
    <property type="match status" value="1"/>
</dbReference>
<dbReference type="InterPro" id="IPR001063">
    <property type="entry name" value="Ribosomal_uL22"/>
</dbReference>
<dbReference type="InterPro" id="IPR005727">
    <property type="entry name" value="Ribosomal_uL22_bac/chlpt-type"/>
</dbReference>
<dbReference type="InterPro" id="IPR047867">
    <property type="entry name" value="Ribosomal_uL22_bac/org-type"/>
</dbReference>
<dbReference type="InterPro" id="IPR018260">
    <property type="entry name" value="Ribosomal_uL22_CS"/>
</dbReference>
<dbReference type="InterPro" id="IPR036394">
    <property type="entry name" value="Ribosomal_uL22_sf"/>
</dbReference>
<dbReference type="NCBIfam" id="TIGR01044">
    <property type="entry name" value="rplV_bact"/>
    <property type="match status" value="1"/>
</dbReference>
<dbReference type="PANTHER" id="PTHR13501">
    <property type="entry name" value="CHLOROPLAST 50S RIBOSOMAL PROTEIN L22-RELATED"/>
    <property type="match status" value="1"/>
</dbReference>
<dbReference type="PANTHER" id="PTHR13501:SF8">
    <property type="entry name" value="LARGE RIBOSOMAL SUBUNIT PROTEIN UL22M"/>
    <property type="match status" value="1"/>
</dbReference>
<dbReference type="Pfam" id="PF00237">
    <property type="entry name" value="Ribosomal_L22"/>
    <property type="match status" value="1"/>
</dbReference>
<dbReference type="SUPFAM" id="SSF54843">
    <property type="entry name" value="Ribosomal protein L22"/>
    <property type="match status" value="1"/>
</dbReference>
<dbReference type="PROSITE" id="PS00464">
    <property type="entry name" value="RIBOSOMAL_L22"/>
    <property type="match status" value="1"/>
</dbReference>
<feature type="chain" id="PRO_0000243174" description="Large ribosomal subunit protein uL22">
    <location>
        <begin position="1"/>
        <end position="109"/>
    </location>
</feature>
<evidence type="ECO:0000255" key="1">
    <source>
        <dbReference type="HAMAP-Rule" id="MF_01331"/>
    </source>
</evidence>
<evidence type="ECO:0000305" key="2"/>
<organism>
    <name type="scientific">Neisseria gonorrhoeae (strain ATCC 700825 / FA 1090)</name>
    <dbReference type="NCBI Taxonomy" id="242231"/>
    <lineage>
        <taxon>Bacteria</taxon>
        <taxon>Pseudomonadati</taxon>
        <taxon>Pseudomonadota</taxon>
        <taxon>Betaproteobacteria</taxon>
        <taxon>Neisseriales</taxon>
        <taxon>Neisseriaceae</taxon>
        <taxon>Neisseria</taxon>
    </lineage>
</organism>
<keyword id="KW-1185">Reference proteome</keyword>
<keyword id="KW-0687">Ribonucleoprotein</keyword>
<keyword id="KW-0689">Ribosomal protein</keyword>
<keyword id="KW-0694">RNA-binding</keyword>
<keyword id="KW-0699">rRNA-binding</keyword>
<name>RL22_NEIG1</name>
<comment type="function">
    <text evidence="1">This protein binds specifically to 23S rRNA; its binding is stimulated by other ribosomal proteins, e.g. L4, L17, and L20. It is important during the early stages of 50S assembly. It makes multiple contacts with different domains of the 23S rRNA in the assembled 50S subunit and ribosome (By similarity).</text>
</comment>
<comment type="function">
    <text evidence="1">The globular domain of the protein is located near the polypeptide exit tunnel on the outside of the subunit, while an extended beta-hairpin is found that lines the wall of the exit tunnel in the center of the 70S ribosome.</text>
</comment>
<comment type="subunit">
    <text evidence="1">Part of the 50S ribosomal subunit.</text>
</comment>
<comment type="similarity">
    <text evidence="1">Belongs to the universal ribosomal protein uL22 family.</text>
</comment>
<protein>
    <recommendedName>
        <fullName evidence="1">Large ribosomal subunit protein uL22</fullName>
    </recommendedName>
    <alternativeName>
        <fullName evidence="2">50S ribosomal protein L22</fullName>
    </alternativeName>
</protein>
<proteinExistence type="inferred from homology"/>